<comment type="function">
    <text evidence="4 5">Specific in hydrolyzing the terminal glycosidic bond of polygalacturonic acid and oligogalacturonates.</text>
</comment>
<comment type="catalytic activity">
    <reaction evidence="4 5">
        <text>[(1-&gt;4)-alpha-D-galacturonosyl](n) + H2O = alpha-D-galacturonate + [(1-&gt;4)-alpha-D-galacturonosyl](n-1)</text>
        <dbReference type="Rhea" id="RHEA:14117"/>
        <dbReference type="Rhea" id="RHEA-COMP:14570"/>
        <dbReference type="Rhea" id="RHEA-COMP:14572"/>
        <dbReference type="ChEBI" id="CHEBI:15377"/>
        <dbReference type="ChEBI" id="CHEBI:58658"/>
        <dbReference type="ChEBI" id="CHEBI:140523"/>
        <dbReference type="EC" id="3.2.1.67"/>
    </reaction>
</comment>
<comment type="biophysicochemical properties">
    <phDependence>
        <text evidence="5">Optimum pH is 4.0.</text>
    </phDependence>
    <temperatureDependence>
        <text evidence="5">Optimum temperature is 30 degrees Celsius.</text>
    </temperatureDependence>
</comment>
<comment type="subcellular location">
    <subcellularLocation>
        <location evidence="8 9">Secreted</location>
    </subcellularLocation>
</comment>
<comment type="PTM">
    <text evidence="5">N-glycosylated.</text>
</comment>
<comment type="similarity">
    <text evidence="7">Belongs to the glycosyl hydrolase 28 family.</text>
</comment>
<feature type="signal peptide" evidence="2">
    <location>
        <begin position="1"/>
        <end position="26"/>
    </location>
</feature>
<feature type="chain" id="PRO_0000432725" description="Exopolygalacturonase rpg15" evidence="2">
    <location>
        <begin position="27"/>
        <end position="385"/>
    </location>
</feature>
<feature type="repeat" description="PbH1 1" evidence="2">
    <location>
        <begin position="165"/>
        <end position="195"/>
    </location>
</feature>
<feature type="repeat" description="PbH1 2" evidence="2">
    <location>
        <begin position="196"/>
        <end position="217"/>
    </location>
</feature>
<feature type="repeat" description="PbH1 3" evidence="2">
    <location>
        <begin position="219"/>
        <end position="241"/>
    </location>
</feature>
<feature type="repeat" description="PbH1 4" evidence="2">
    <location>
        <begin position="249"/>
        <end position="270"/>
    </location>
</feature>
<feature type="repeat" description="PbH1 5" evidence="2">
    <location>
        <begin position="350"/>
        <end position="376"/>
    </location>
</feature>
<feature type="active site" description="Proton donor" evidence="1">
    <location>
        <position position="210"/>
    </location>
</feature>
<feature type="active site" evidence="1">
    <location>
        <position position="233"/>
    </location>
</feature>
<feature type="glycosylation site" description="N-linked (GlcNAc...) asparagine" evidence="3">
    <location>
        <position position="143"/>
    </location>
</feature>
<feature type="glycosylation site" description="N-linked (GlcNAc...) asparagine" evidence="3">
    <location>
        <position position="161"/>
    </location>
</feature>
<feature type="glycosylation site" description="N-linked (GlcNAc...) asparagine" evidence="3">
    <location>
        <position position="164"/>
    </location>
</feature>
<feature type="glycosylation site" description="N-linked (GlcNAc...) asparagine" evidence="3">
    <location>
        <position position="180"/>
    </location>
</feature>
<feature type="glycosylation site" description="N-linked (GlcNAc...) asparagine" evidence="3">
    <location>
        <position position="226"/>
    </location>
</feature>
<feature type="glycosylation site" description="N-linked (GlcNAc...) asparagine" evidence="3">
    <location>
        <position position="256"/>
    </location>
</feature>
<feature type="glycosylation site" description="N-linked (GlcNAc...) asparagine" evidence="3">
    <location>
        <position position="319"/>
    </location>
</feature>
<feature type="glycosylation site" description="N-linked (GlcNAc...) asparagine" evidence="3">
    <location>
        <position position="343"/>
    </location>
</feature>
<feature type="glycosylation site" description="N-linked (GlcNAc...) asparagine" evidence="3">
    <location>
        <position position="365"/>
    </location>
</feature>
<feature type="disulfide bond" evidence="1">
    <location>
        <begin position="212"/>
        <end position="229"/>
    </location>
</feature>
<feature type="disulfide bond" evidence="1">
    <location>
        <begin position="344"/>
        <end position="350"/>
    </location>
</feature>
<proteinExistence type="evidence at protein level"/>
<protein>
    <recommendedName>
        <fullName evidence="6">Exopolygalacturonase rpg15</fullName>
        <ecNumber evidence="4">3.2.1.67</ecNumber>
    </recommendedName>
    <alternativeName>
        <fullName evidence="7">Galacturan 1,4-alpha-galacturonidase rpg15</fullName>
    </alternativeName>
    <alternativeName>
        <fullName evidence="7">Poly(1,4-alpha-D-galacturonide)galacturonohydrolase rpg15</fullName>
    </alternativeName>
</protein>
<sequence length="385" mass="41501">MVRFISFTSPIAALLLLSFGVKHASTASTNTCIVANSDSDDAITIAEAFEKCKTGGTVVFPKDSSYQLNSIVTTSDLKNVNINFAGTIHLPAREESYRNGDYYIQIKGTHIKMYGGGTINGHGQAWYDALDHTAPSVLRIAANDSIIGGFTIINSPRAHLNVTNSTNLVLHDFTLHTVSNNSYLPKNTDALDLYHSSGITFRDSMLTIGDDCVAIKEDVEKVIVSNVTCRGGHGYSIGSLGIGGRKDYVKHVNFRNSTCIDCENGVRVKTWAGGKGIVEDINYNDIILQNVDNPILVTTHYCDPNVIEYCNGNDDNSLNISSIHFKDITGTASALGNPIVNVNCSIESPCSDITFSGIDITKASNTTDNVCVYLEGSDEVSECSS</sequence>
<organism>
    <name type="scientific">Rhizopus delemar (strain RA 99-880 / ATCC MYA-4621 / FGSC 9543 / NRRL 43880)</name>
    <name type="common">Mucormycosis agent</name>
    <name type="synonym">Rhizopus arrhizus var. delemar</name>
    <dbReference type="NCBI Taxonomy" id="246409"/>
    <lineage>
        <taxon>Eukaryota</taxon>
        <taxon>Fungi</taxon>
        <taxon>Fungi incertae sedis</taxon>
        <taxon>Mucoromycota</taxon>
        <taxon>Mucoromycotina</taxon>
        <taxon>Mucoromycetes</taxon>
        <taxon>Mucorales</taxon>
        <taxon>Mucorineae</taxon>
        <taxon>Rhizopodaceae</taxon>
        <taxon>Rhizopus</taxon>
    </lineage>
</organism>
<accession>I1BYM7</accession>
<evidence type="ECO:0000250" key="1">
    <source>
        <dbReference type="UniProtKB" id="O74213"/>
    </source>
</evidence>
<evidence type="ECO:0000255" key="2"/>
<evidence type="ECO:0000255" key="3">
    <source>
        <dbReference type="PROSITE-ProRule" id="PRU00498"/>
    </source>
</evidence>
<evidence type="ECO:0000269" key="4">
    <source>
    </source>
</evidence>
<evidence type="ECO:0000269" key="5">
    <source>
    </source>
</evidence>
<evidence type="ECO:0000303" key="6">
    <source>
    </source>
</evidence>
<evidence type="ECO:0000305" key="7"/>
<evidence type="ECO:0000305" key="8">
    <source>
    </source>
</evidence>
<evidence type="ECO:0000305" key="9">
    <source>
    </source>
</evidence>
<keyword id="KW-0961">Cell wall biogenesis/degradation</keyword>
<keyword id="KW-1015">Disulfide bond</keyword>
<keyword id="KW-0325">Glycoprotein</keyword>
<keyword id="KW-0326">Glycosidase</keyword>
<keyword id="KW-0378">Hydrolase</keyword>
<keyword id="KW-1185">Reference proteome</keyword>
<keyword id="KW-0677">Repeat</keyword>
<keyword id="KW-0964">Secreted</keyword>
<keyword id="KW-0732">Signal</keyword>
<dbReference type="EC" id="3.2.1.67" evidence="4"/>
<dbReference type="EMBL" id="CH476735">
    <property type="protein sequence ID" value="EIE81307.1"/>
    <property type="molecule type" value="Genomic_DNA"/>
</dbReference>
<dbReference type="SMR" id="I1BYM7"/>
<dbReference type="STRING" id="246409.I1BYM7"/>
<dbReference type="GlyCosmos" id="I1BYM7">
    <property type="glycosylation" value="9 sites, No reported glycans"/>
</dbReference>
<dbReference type="VEuPathDB" id="FungiDB:RO3G_06012"/>
<dbReference type="eggNOG" id="ENOG502QPPR">
    <property type="taxonomic scope" value="Eukaryota"/>
</dbReference>
<dbReference type="InParanoid" id="I1BYM7"/>
<dbReference type="OMA" id="INQCYST"/>
<dbReference type="OrthoDB" id="4683at4827"/>
<dbReference type="Proteomes" id="UP000009138">
    <property type="component" value="Unassembled WGS sequence"/>
</dbReference>
<dbReference type="GO" id="GO:0005576">
    <property type="term" value="C:extracellular region"/>
    <property type="evidence" value="ECO:0007669"/>
    <property type="project" value="UniProtKB-SubCell"/>
</dbReference>
<dbReference type="GO" id="GO:0047911">
    <property type="term" value="F:galacturan 1,4-alpha-galacturonidase activity"/>
    <property type="evidence" value="ECO:0007669"/>
    <property type="project" value="UniProtKB-EC"/>
</dbReference>
<dbReference type="GO" id="GO:0004650">
    <property type="term" value="F:polygalacturonase activity"/>
    <property type="evidence" value="ECO:0007669"/>
    <property type="project" value="InterPro"/>
</dbReference>
<dbReference type="GO" id="GO:0046576">
    <property type="term" value="F:rhamnogalacturonan alpha-L-rhamnopyranosyl-(1-&gt;4)-alpha-D-galactopyranosyluronide lyase activity"/>
    <property type="evidence" value="ECO:0007669"/>
    <property type="project" value="UniProtKB-ARBA"/>
</dbReference>
<dbReference type="GO" id="GO:0071555">
    <property type="term" value="P:cell wall organization"/>
    <property type="evidence" value="ECO:0007669"/>
    <property type="project" value="UniProtKB-KW"/>
</dbReference>
<dbReference type="GO" id="GO:0045490">
    <property type="term" value="P:pectin catabolic process"/>
    <property type="evidence" value="ECO:0007669"/>
    <property type="project" value="UniProtKB-ARBA"/>
</dbReference>
<dbReference type="Gene3D" id="2.160.20.10">
    <property type="entry name" value="Single-stranded right-handed beta-helix, Pectin lyase-like"/>
    <property type="match status" value="1"/>
</dbReference>
<dbReference type="InterPro" id="IPR000743">
    <property type="entry name" value="Glyco_hydro_28"/>
</dbReference>
<dbReference type="InterPro" id="IPR006626">
    <property type="entry name" value="PbH1"/>
</dbReference>
<dbReference type="InterPro" id="IPR012334">
    <property type="entry name" value="Pectin_lyas_fold"/>
</dbReference>
<dbReference type="InterPro" id="IPR011050">
    <property type="entry name" value="Pectin_lyase_fold/virulence"/>
</dbReference>
<dbReference type="PANTHER" id="PTHR31736">
    <property type="match status" value="1"/>
</dbReference>
<dbReference type="PANTHER" id="PTHR31736:SF19">
    <property type="entry name" value="PECTIN LYASE SUPERFAMILY PROTEIN-RELATED"/>
    <property type="match status" value="1"/>
</dbReference>
<dbReference type="Pfam" id="PF00295">
    <property type="entry name" value="Glyco_hydro_28"/>
    <property type="match status" value="1"/>
</dbReference>
<dbReference type="SMART" id="SM00710">
    <property type="entry name" value="PbH1"/>
    <property type="match status" value="5"/>
</dbReference>
<dbReference type="SUPFAM" id="SSF51126">
    <property type="entry name" value="Pectin lyase-like"/>
    <property type="match status" value="1"/>
</dbReference>
<name>RPG15_RHIO9</name>
<gene>
    <name evidence="6" type="primary">rpg15</name>
    <name type="ORF">RO3G_06012</name>
</gene>
<reference key="1">
    <citation type="journal article" date="2009" name="PLoS Genet.">
        <title>Genomic analysis of the basal lineage fungus Rhizopus oryzae reveals a whole-genome duplication.</title>
        <authorList>
            <person name="Ma L.-J."/>
            <person name="Ibrahim A.S."/>
            <person name="Skory C."/>
            <person name="Grabherr M.G."/>
            <person name="Burger G."/>
            <person name="Butler M."/>
            <person name="Elias M."/>
            <person name="Idnurm A."/>
            <person name="Lang B.F."/>
            <person name="Sone T."/>
            <person name="Abe A."/>
            <person name="Calvo S.E."/>
            <person name="Corrochano L.M."/>
            <person name="Engels R."/>
            <person name="Fu J."/>
            <person name="Hansberg W."/>
            <person name="Kim J.-M."/>
            <person name="Kodira C.D."/>
            <person name="Koehrsen M.J."/>
            <person name="Liu B."/>
            <person name="Miranda-Saavedra D."/>
            <person name="O'Leary S."/>
            <person name="Ortiz-Castellanos L."/>
            <person name="Poulter R."/>
            <person name="Rodriguez-Romero J."/>
            <person name="Ruiz-Herrera J."/>
            <person name="Shen Y.-Q."/>
            <person name="Zeng Q."/>
            <person name="Galagan J."/>
            <person name="Birren B.W."/>
            <person name="Cuomo C.A."/>
            <person name="Wickes B.L."/>
        </authorList>
    </citation>
    <scope>NUCLEOTIDE SEQUENCE [LARGE SCALE GENOMIC DNA]</scope>
    <source>
        <strain>RA 99-880 / ATCC MYA-4621 / FGSC 9543 / NRRL 43880</strain>
    </source>
</reference>
<reference key="2">
    <citation type="journal article" date="2008" name="Fungal Genet. Biol.">
        <title>Identification, biochemical characterization, and evolution of the Rhizopus oryzae 99-880 polygalacturonase gene family.</title>
        <authorList>
            <person name="Mertens J.A."/>
            <person name="Burdick R.C."/>
            <person name="Rooney A.P."/>
        </authorList>
    </citation>
    <scope>FUNCTION</scope>
    <scope>CATALYTIC ACTIVITY</scope>
</reference>
<reference key="3">
    <citation type="journal article" date="2011" name="Curr. Microbiol.">
        <title>Expression and characterization of fifteen Rhizopus oryzae 99-880 polygalacturonase enzymes in Pichia pastoris.</title>
        <authorList>
            <person name="Mertens J.A."/>
            <person name="Bowman M.J."/>
        </authorList>
    </citation>
    <scope>FUNCTION</scope>
    <scope>CATALYTIC ACTIVITY</scope>
    <scope>BIOPHYSICOCHEMICAL PROPERTIES</scope>
    <scope>GLYCOSYLATION</scope>
</reference>